<evidence type="ECO:0000255" key="1">
    <source>
        <dbReference type="HAMAP-Rule" id="MF_00446"/>
    </source>
</evidence>
<reference key="1">
    <citation type="journal article" date="2011" name="Stand. Genomic Sci.">
        <title>Complete genome sequence of the halophilic and highly halotolerant Chromohalobacter salexigens type strain (1H11(T)).</title>
        <authorList>
            <person name="Copeland A."/>
            <person name="O'Connor K."/>
            <person name="Lucas S."/>
            <person name="Lapidus A."/>
            <person name="Berry K.W."/>
            <person name="Detter J.C."/>
            <person name="Del Rio T.G."/>
            <person name="Hammon N."/>
            <person name="Dalin E."/>
            <person name="Tice H."/>
            <person name="Pitluck S."/>
            <person name="Bruce D."/>
            <person name="Goodwin L."/>
            <person name="Han C."/>
            <person name="Tapia R."/>
            <person name="Saunders E."/>
            <person name="Schmutz J."/>
            <person name="Brettin T."/>
            <person name="Larimer F."/>
            <person name="Land M."/>
            <person name="Hauser L."/>
            <person name="Vargas C."/>
            <person name="Nieto J.J."/>
            <person name="Kyrpides N.C."/>
            <person name="Ivanova N."/>
            <person name="Goker M."/>
            <person name="Klenk H.P."/>
            <person name="Csonka L.N."/>
            <person name="Woyke T."/>
        </authorList>
    </citation>
    <scope>NUCLEOTIDE SEQUENCE [LARGE SCALE GENOMIC DNA]</scope>
    <source>
        <strain>ATCC BAA-138 / DSM 3043 / CIP 106854 / NCIMB 13768 / 1H11</strain>
    </source>
</reference>
<gene>
    <name evidence="1" type="primary">panD</name>
    <name type="ordered locus">Csal_3067</name>
</gene>
<proteinExistence type="inferred from homology"/>
<keyword id="KW-0068">Autocatalytic cleavage</keyword>
<keyword id="KW-0963">Cytoplasm</keyword>
<keyword id="KW-0210">Decarboxylase</keyword>
<keyword id="KW-0456">Lyase</keyword>
<keyword id="KW-0566">Pantothenate biosynthesis</keyword>
<keyword id="KW-0670">Pyruvate</keyword>
<keyword id="KW-1185">Reference proteome</keyword>
<keyword id="KW-0704">Schiff base</keyword>
<keyword id="KW-0865">Zymogen</keyword>
<protein>
    <recommendedName>
        <fullName evidence="1">Aspartate 1-decarboxylase</fullName>
        <ecNumber evidence="1">4.1.1.11</ecNumber>
    </recommendedName>
    <alternativeName>
        <fullName evidence="1">Aspartate alpha-decarboxylase</fullName>
    </alternativeName>
    <component>
        <recommendedName>
            <fullName evidence="1">Aspartate 1-decarboxylase beta chain</fullName>
        </recommendedName>
    </component>
    <component>
        <recommendedName>
            <fullName evidence="1">Aspartate 1-decarboxylase alpha chain</fullName>
        </recommendedName>
    </component>
</protein>
<organism>
    <name type="scientific">Chromohalobacter salexigens (strain ATCC BAA-138 / DSM 3043 / CIP 106854 / NCIMB 13768 / 1H11)</name>
    <dbReference type="NCBI Taxonomy" id="290398"/>
    <lineage>
        <taxon>Bacteria</taxon>
        <taxon>Pseudomonadati</taxon>
        <taxon>Pseudomonadota</taxon>
        <taxon>Gammaproteobacteria</taxon>
        <taxon>Oceanospirillales</taxon>
        <taxon>Halomonadaceae</taxon>
        <taxon>Chromohalobacter</taxon>
    </lineage>
</organism>
<accession>Q1QSZ7</accession>
<sequence>MYTIMLKAKLHMARVTHAVLDYEGSCAIDGELLDLAGIRENEQIQIYDVENGNRFTTYAIRGEAGSRLISINGAAAHQAQVGDRVIICSYAHYAEHELATHQPALVYLQDGNQISHTSHAIPVQFA</sequence>
<feature type="chain" id="PRO_0000306951" description="Aspartate 1-decarboxylase beta chain" evidence="1">
    <location>
        <begin position="1"/>
        <end position="24"/>
    </location>
</feature>
<feature type="chain" id="PRO_0000306952" description="Aspartate 1-decarboxylase alpha chain" evidence="1">
    <location>
        <begin position="25"/>
        <end position="126"/>
    </location>
</feature>
<feature type="active site" description="Schiff-base intermediate with substrate; via pyruvic acid" evidence="1">
    <location>
        <position position="25"/>
    </location>
</feature>
<feature type="active site" description="Proton donor" evidence="1">
    <location>
        <position position="58"/>
    </location>
</feature>
<feature type="binding site" evidence="1">
    <location>
        <position position="57"/>
    </location>
    <ligand>
        <name>substrate</name>
    </ligand>
</feature>
<feature type="binding site" evidence="1">
    <location>
        <begin position="73"/>
        <end position="75"/>
    </location>
    <ligand>
        <name>substrate</name>
    </ligand>
</feature>
<feature type="modified residue" description="Pyruvic acid (Ser)" evidence="1">
    <location>
        <position position="25"/>
    </location>
</feature>
<dbReference type="EC" id="4.1.1.11" evidence="1"/>
<dbReference type="EMBL" id="CP000285">
    <property type="protein sequence ID" value="ABE60411.1"/>
    <property type="molecule type" value="Genomic_DNA"/>
</dbReference>
<dbReference type="RefSeq" id="WP_011508357.1">
    <property type="nucleotide sequence ID" value="NC_007963.1"/>
</dbReference>
<dbReference type="SMR" id="Q1QSZ7"/>
<dbReference type="STRING" id="290398.Csal_3067"/>
<dbReference type="GeneID" id="95335761"/>
<dbReference type="KEGG" id="csa:Csal_3067"/>
<dbReference type="eggNOG" id="COG0853">
    <property type="taxonomic scope" value="Bacteria"/>
</dbReference>
<dbReference type="HOGENOM" id="CLU_115305_2_1_6"/>
<dbReference type="OrthoDB" id="9803983at2"/>
<dbReference type="UniPathway" id="UPA00028">
    <property type="reaction ID" value="UER00002"/>
</dbReference>
<dbReference type="Proteomes" id="UP000000239">
    <property type="component" value="Chromosome"/>
</dbReference>
<dbReference type="GO" id="GO:0005829">
    <property type="term" value="C:cytosol"/>
    <property type="evidence" value="ECO:0007669"/>
    <property type="project" value="TreeGrafter"/>
</dbReference>
<dbReference type="GO" id="GO:0004068">
    <property type="term" value="F:aspartate 1-decarboxylase activity"/>
    <property type="evidence" value="ECO:0007669"/>
    <property type="project" value="UniProtKB-UniRule"/>
</dbReference>
<dbReference type="GO" id="GO:0006523">
    <property type="term" value="P:alanine biosynthetic process"/>
    <property type="evidence" value="ECO:0007669"/>
    <property type="project" value="InterPro"/>
</dbReference>
<dbReference type="GO" id="GO:0015940">
    <property type="term" value="P:pantothenate biosynthetic process"/>
    <property type="evidence" value="ECO:0007669"/>
    <property type="project" value="UniProtKB-UniRule"/>
</dbReference>
<dbReference type="CDD" id="cd06919">
    <property type="entry name" value="Asp_decarbox"/>
    <property type="match status" value="1"/>
</dbReference>
<dbReference type="Gene3D" id="2.40.40.20">
    <property type="match status" value="1"/>
</dbReference>
<dbReference type="HAMAP" id="MF_00446">
    <property type="entry name" value="PanD"/>
    <property type="match status" value="1"/>
</dbReference>
<dbReference type="InterPro" id="IPR009010">
    <property type="entry name" value="Asp_de-COase-like_dom_sf"/>
</dbReference>
<dbReference type="InterPro" id="IPR003190">
    <property type="entry name" value="Asp_decarbox"/>
</dbReference>
<dbReference type="NCBIfam" id="TIGR00223">
    <property type="entry name" value="panD"/>
    <property type="match status" value="1"/>
</dbReference>
<dbReference type="PANTHER" id="PTHR21012">
    <property type="entry name" value="ASPARTATE 1-DECARBOXYLASE"/>
    <property type="match status" value="1"/>
</dbReference>
<dbReference type="PANTHER" id="PTHR21012:SF0">
    <property type="entry name" value="ASPARTATE 1-DECARBOXYLASE"/>
    <property type="match status" value="1"/>
</dbReference>
<dbReference type="Pfam" id="PF02261">
    <property type="entry name" value="Asp_decarbox"/>
    <property type="match status" value="1"/>
</dbReference>
<dbReference type="PIRSF" id="PIRSF006246">
    <property type="entry name" value="Asp_decarbox"/>
    <property type="match status" value="1"/>
</dbReference>
<dbReference type="SUPFAM" id="SSF50692">
    <property type="entry name" value="ADC-like"/>
    <property type="match status" value="1"/>
</dbReference>
<comment type="function">
    <text evidence="1">Catalyzes the pyruvoyl-dependent decarboxylation of aspartate to produce beta-alanine.</text>
</comment>
<comment type="catalytic activity">
    <reaction evidence="1">
        <text>L-aspartate + H(+) = beta-alanine + CO2</text>
        <dbReference type="Rhea" id="RHEA:19497"/>
        <dbReference type="ChEBI" id="CHEBI:15378"/>
        <dbReference type="ChEBI" id="CHEBI:16526"/>
        <dbReference type="ChEBI" id="CHEBI:29991"/>
        <dbReference type="ChEBI" id="CHEBI:57966"/>
        <dbReference type="EC" id="4.1.1.11"/>
    </reaction>
</comment>
<comment type="cofactor">
    <cofactor evidence="1">
        <name>pyruvate</name>
        <dbReference type="ChEBI" id="CHEBI:15361"/>
    </cofactor>
    <text evidence="1">Binds 1 pyruvoyl group covalently per subunit.</text>
</comment>
<comment type="pathway">
    <text evidence="1">Cofactor biosynthesis; (R)-pantothenate biosynthesis; beta-alanine from L-aspartate: step 1/1.</text>
</comment>
<comment type="subunit">
    <text evidence="1">Heterooctamer of four alpha and four beta subunits.</text>
</comment>
<comment type="subcellular location">
    <subcellularLocation>
        <location evidence="1">Cytoplasm</location>
    </subcellularLocation>
</comment>
<comment type="PTM">
    <text evidence="1">Is synthesized initially as an inactive proenzyme, which is activated by self-cleavage at a specific serine bond to produce a beta-subunit with a hydroxyl group at its C-terminus and an alpha-subunit with a pyruvoyl group at its N-terminus.</text>
</comment>
<comment type="similarity">
    <text evidence="1">Belongs to the PanD family.</text>
</comment>
<name>PAND_CHRSD</name>